<dbReference type="EMBL" id="CP000103">
    <property type="protein sequence ID" value="ABB74064.1"/>
    <property type="molecule type" value="Genomic_DNA"/>
</dbReference>
<dbReference type="RefSeq" id="WP_011380114.1">
    <property type="nucleotide sequence ID" value="NC_007614.1"/>
</dbReference>
<dbReference type="SMR" id="Q2YB07"/>
<dbReference type="STRING" id="323848.Nmul_A0757"/>
<dbReference type="KEGG" id="nmu:Nmul_A0757"/>
<dbReference type="eggNOG" id="COG0244">
    <property type="taxonomic scope" value="Bacteria"/>
</dbReference>
<dbReference type="HOGENOM" id="CLU_092227_0_0_4"/>
<dbReference type="OrthoDB" id="9808307at2"/>
<dbReference type="Proteomes" id="UP000002718">
    <property type="component" value="Chromosome"/>
</dbReference>
<dbReference type="GO" id="GO:1990904">
    <property type="term" value="C:ribonucleoprotein complex"/>
    <property type="evidence" value="ECO:0007669"/>
    <property type="project" value="UniProtKB-KW"/>
</dbReference>
<dbReference type="GO" id="GO:0005840">
    <property type="term" value="C:ribosome"/>
    <property type="evidence" value="ECO:0007669"/>
    <property type="project" value="UniProtKB-KW"/>
</dbReference>
<dbReference type="GO" id="GO:0070180">
    <property type="term" value="F:large ribosomal subunit rRNA binding"/>
    <property type="evidence" value="ECO:0007669"/>
    <property type="project" value="UniProtKB-UniRule"/>
</dbReference>
<dbReference type="GO" id="GO:0006412">
    <property type="term" value="P:translation"/>
    <property type="evidence" value="ECO:0007669"/>
    <property type="project" value="UniProtKB-UniRule"/>
</dbReference>
<dbReference type="CDD" id="cd05797">
    <property type="entry name" value="Ribosomal_L10"/>
    <property type="match status" value="1"/>
</dbReference>
<dbReference type="Gene3D" id="3.30.70.1730">
    <property type="match status" value="1"/>
</dbReference>
<dbReference type="Gene3D" id="6.10.250.290">
    <property type="match status" value="1"/>
</dbReference>
<dbReference type="HAMAP" id="MF_00362">
    <property type="entry name" value="Ribosomal_uL10"/>
    <property type="match status" value="1"/>
</dbReference>
<dbReference type="InterPro" id="IPR001790">
    <property type="entry name" value="Ribosomal_uL10"/>
</dbReference>
<dbReference type="InterPro" id="IPR043141">
    <property type="entry name" value="Ribosomal_uL10-like_sf"/>
</dbReference>
<dbReference type="InterPro" id="IPR022973">
    <property type="entry name" value="Ribosomal_uL10_bac"/>
</dbReference>
<dbReference type="InterPro" id="IPR047865">
    <property type="entry name" value="Ribosomal_uL10_bac_type"/>
</dbReference>
<dbReference type="NCBIfam" id="NF000955">
    <property type="entry name" value="PRK00099.1-1"/>
    <property type="match status" value="1"/>
</dbReference>
<dbReference type="PANTHER" id="PTHR11560">
    <property type="entry name" value="39S RIBOSOMAL PROTEIN L10, MITOCHONDRIAL"/>
    <property type="match status" value="1"/>
</dbReference>
<dbReference type="Pfam" id="PF00466">
    <property type="entry name" value="Ribosomal_L10"/>
    <property type="match status" value="1"/>
</dbReference>
<dbReference type="SUPFAM" id="SSF160369">
    <property type="entry name" value="Ribosomal protein L10-like"/>
    <property type="match status" value="1"/>
</dbReference>
<accession>Q2YB07</accession>
<evidence type="ECO:0000255" key="1">
    <source>
        <dbReference type="HAMAP-Rule" id="MF_00362"/>
    </source>
</evidence>
<evidence type="ECO:0000305" key="2"/>
<name>RL10_NITMU</name>
<organism>
    <name type="scientific">Nitrosospira multiformis (strain ATCC 25196 / NCIMB 11849 / C 71)</name>
    <dbReference type="NCBI Taxonomy" id="323848"/>
    <lineage>
        <taxon>Bacteria</taxon>
        <taxon>Pseudomonadati</taxon>
        <taxon>Pseudomonadota</taxon>
        <taxon>Betaproteobacteria</taxon>
        <taxon>Nitrosomonadales</taxon>
        <taxon>Nitrosomonadaceae</taxon>
        <taxon>Nitrosospira</taxon>
    </lineage>
</organism>
<proteinExistence type="inferred from homology"/>
<sequence length="174" mass="18507">MSLNLDEKKAVVAEVSAQVAKAQAIIIAEYRGLGVGHMTQLRAKARQSGIYFRVLKNSLARRAVSDTPFSGLSEHMVGPLAYGIGSDPVAAAKVLHEFSKGNDKLVIKAGAMANHVISSSEIASLASLPSREELLAKLLGTMQAPVANFVRTLNEVPARFVRGLAAVRDQKESA</sequence>
<gene>
    <name evidence="1" type="primary">rplJ</name>
    <name type="ordered locus">Nmul_A0757</name>
</gene>
<keyword id="KW-1185">Reference proteome</keyword>
<keyword id="KW-0687">Ribonucleoprotein</keyword>
<keyword id="KW-0689">Ribosomal protein</keyword>
<keyword id="KW-0694">RNA-binding</keyword>
<keyword id="KW-0699">rRNA-binding</keyword>
<reference key="1">
    <citation type="submission" date="2005-08" db="EMBL/GenBank/DDBJ databases">
        <title>Complete sequence of chromosome 1 of Nitrosospira multiformis ATCC 25196.</title>
        <authorList>
            <person name="Copeland A."/>
            <person name="Lucas S."/>
            <person name="Lapidus A."/>
            <person name="Barry K."/>
            <person name="Detter J.C."/>
            <person name="Glavina T."/>
            <person name="Hammon N."/>
            <person name="Israni S."/>
            <person name="Pitluck S."/>
            <person name="Chain P."/>
            <person name="Malfatti S."/>
            <person name="Shin M."/>
            <person name="Vergez L."/>
            <person name="Schmutz J."/>
            <person name="Larimer F."/>
            <person name="Land M."/>
            <person name="Hauser L."/>
            <person name="Kyrpides N."/>
            <person name="Lykidis A."/>
            <person name="Richardson P."/>
        </authorList>
    </citation>
    <scope>NUCLEOTIDE SEQUENCE [LARGE SCALE GENOMIC DNA]</scope>
    <source>
        <strain>ATCC 25196 / NCIMB 11849 / C 71</strain>
    </source>
</reference>
<feature type="chain" id="PRO_0000234865" description="Large ribosomal subunit protein uL10">
    <location>
        <begin position="1"/>
        <end position="174"/>
    </location>
</feature>
<comment type="function">
    <text evidence="1">Forms part of the ribosomal stalk, playing a central role in the interaction of the ribosome with GTP-bound translation factors.</text>
</comment>
<comment type="subunit">
    <text evidence="1">Part of the ribosomal stalk of the 50S ribosomal subunit. The N-terminus interacts with L11 and the large rRNA to form the base of the stalk. The C-terminus forms an elongated spine to which L12 dimers bind in a sequential fashion forming a multimeric L10(L12)X complex.</text>
</comment>
<comment type="similarity">
    <text evidence="1">Belongs to the universal ribosomal protein uL10 family.</text>
</comment>
<protein>
    <recommendedName>
        <fullName evidence="1">Large ribosomal subunit protein uL10</fullName>
    </recommendedName>
    <alternativeName>
        <fullName evidence="2">50S ribosomal protein L10</fullName>
    </alternativeName>
</protein>